<gene>
    <name evidence="1" type="primary">clpP2</name>
    <name type="ordered locus">MT2535</name>
</gene>
<accession>P9WPC2</accession>
<accession>L0TCE9</accession>
<accession>O53187</accession>
<accession>P63783</accession>
<comment type="function">
    <text evidence="1">Cleaves peptides in various proteins in a process that requires ATP hydrolysis. Has a chymotrypsin-like activity. Plays a major role in the degradation of misfolded proteins.</text>
</comment>
<comment type="catalytic activity">
    <reaction evidence="1">
        <text>Hydrolysis of proteins to small peptides in the presence of ATP and magnesium. alpha-casein is the usual test substrate. In the absence of ATP, only oligopeptides shorter than five residues are hydrolyzed (such as succinyl-Leu-Tyr-|-NHMec, and Leu-Tyr-Leu-|-Tyr-Trp, in which cleavage of the -Tyr-|-Leu- and -Tyr-|-Trp bonds also occurs).</text>
        <dbReference type="EC" id="3.4.21.92"/>
    </reaction>
</comment>
<comment type="subunit">
    <text evidence="1">Fourteen ClpP subunits assemble into 2 heptameric rings which stack back to back to give a disk-like structure with a central cavity, resembling the structure of eukaryotic proteasomes.</text>
</comment>
<comment type="subcellular location">
    <subcellularLocation>
        <location evidence="1">Cytoplasm</location>
    </subcellularLocation>
</comment>
<comment type="induction">
    <text evidence="2">Expression requires transcriptional regulator ClgR.</text>
</comment>
<comment type="similarity">
    <text evidence="1">Belongs to the peptidase S14 family.</text>
</comment>
<reference key="1">
    <citation type="journal article" date="2002" name="J. Bacteriol.">
        <title>Whole-genome comparison of Mycobacterium tuberculosis clinical and laboratory strains.</title>
        <authorList>
            <person name="Fleischmann R.D."/>
            <person name="Alland D."/>
            <person name="Eisen J.A."/>
            <person name="Carpenter L."/>
            <person name="White O."/>
            <person name="Peterson J.D."/>
            <person name="DeBoy R.T."/>
            <person name="Dodson R.J."/>
            <person name="Gwinn M.L."/>
            <person name="Haft D.H."/>
            <person name="Hickey E.K."/>
            <person name="Kolonay J.F."/>
            <person name="Nelson W.C."/>
            <person name="Umayam L.A."/>
            <person name="Ermolaeva M.D."/>
            <person name="Salzberg S.L."/>
            <person name="Delcher A."/>
            <person name="Utterback T.R."/>
            <person name="Weidman J.F."/>
            <person name="Khouri H.M."/>
            <person name="Gill J."/>
            <person name="Mikula A."/>
            <person name="Bishai W."/>
            <person name="Jacobs W.R. Jr."/>
            <person name="Venter J.C."/>
            <person name="Fraser C.M."/>
        </authorList>
    </citation>
    <scope>NUCLEOTIDE SEQUENCE [LARGE SCALE GENOMIC DNA]</scope>
    <source>
        <strain>CDC 1551 / Oshkosh</strain>
    </source>
</reference>
<reference key="2">
    <citation type="journal article" date="2009" name="J. Bacteriol.">
        <title>Functional genomics reveals extended roles of the Mycobacterium tuberculosis stress response factor sigmaH.</title>
        <authorList>
            <person name="Mehra S."/>
            <person name="Kaushal D."/>
        </authorList>
    </citation>
    <scope>INDUCTION</scope>
    <source>
        <strain>CDC 1551 / Oshkosh</strain>
    </source>
</reference>
<proteinExistence type="evidence at transcript level"/>
<protein>
    <recommendedName>
        <fullName evidence="1">ATP-dependent Clp protease proteolytic subunit 2</fullName>
        <ecNumber evidence="1">3.4.21.92</ecNumber>
    </recommendedName>
    <alternativeName>
        <fullName evidence="1">Endopeptidase Clp 2</fullName>
    </alternativeName>
</protein>
<name>CLPP2_MYCTO</name>
<keyword id="KW-0963">Cytoplasm</keyword>
<keyword id="KW-0378">Hydrolase</keyword>
<keyword id="KW-0645">Protease</keyword>
<keyword id="KW-1185">Reference proteome</keyword>
<keyword id="KW-0720">Serine protease</keyword>
<organism>
    <name type="scientific">Mycobacterium tuberculosis (strain CDC 1551 / Oshkosh)</name>
    <dbReference type="NCBI Taxonomy" id="83331"/>
    <lineage>
        <taxon>Bacteria</taxon>
        <taxon>Bacillati</taxon>
        <taxon>Actinomycetota</taxon>
        <taxon>Actinomycetes</taxon>
        <taxon>Mycobacteriales</taxon>
        <taxon>Mycobacteriaceae</taxon>
        <taxon>Mycobacterium</taxon>
        <taxon>Mycobacterium tuberculosis complex</taxon>
    </lineage>
</organism>
<dbReference type="EC" id="3.4.21.92" evidence="1"/>
<dbReference type="EMBL" id="AE000516">
    <property type="protein sequence ID" value="AAK46835.1"/>
    <property type="molecule type" value="Genomic_DNA"/>
</dbReference>
<dbReference type="PIR" id="C70865">
    <property type="entry name" value="C70865"/>
</dbReference>
<dbReference type="RefSeq" id="WP_003412648.1">
    <property type="nucleotide sequence ID" value="NZ_KK341227.1"/>
</dbReference>
<dbReference type="SMR" id="P9WPC2"/>
<dbReference type="MEROPS" id="S14.009"/>
<dbReference type="KEGG" id="mtc:MT2535"/>
<dbReference type="PATRIC" id="fig|83331.31.peg.2736"/>
<dbReference type="HOGENOM" id="CLU_058707_3_2_11"/>
<dbReference type="Proteomes" id="UP000001020">
    <property type="component" value="Chromosome"/>
</dbReference>
<dbReference type="GO" id="GO:0005737">
    <property type="term" value="C:cytoplasm"/>
    <property type="evidence" value="ECO:0007669"/>
    <property type="project" value="UniProtKB-SubCell"/>
</dbReference>
<dbReference type="GO" id="GO:0009368">
    <property type="term" value="C:endopeptidase Clp complex"/>
    <property type="evidence" value="ECO:0007669"/>
    <property type="project" value="TreeGrafter"/>
</dbReference>
<dbReference type="GO" id="GO:0004176">
    <property type="term" value="F:ATP-dependent peptidase activity"/>
    <property type="evidence" value="ECO:0007669"/>
    <property type="project" value="InterPro"/>
</dbReference>
<dbReference type="GO" id="GO:0051117">
    <property type="term" value="F:ATPase binding"/>
    <property type="evidence" value="ECO:0007669"/>
    <property type="project" value="TreeGrafter"/>
</dbReference>
<dbReference type="GO" id="GO:0004252">
    <property type="term" value="F:serine-type endopeptidase activity"/>
    <property type="evidence" value="ECO:0007669"/>
    <property type="project" value="UniProtKB-UniRule"/>
</dbReference>
<dbReference type="GO" id="GO:0006515">
    <property type="term" value="P:protein quality control for misfolded or incompletely synthesized proteins"/>
    <property type="evidence" value="ECO:0007669"/>
    <property type="project" value="TreeGrafter"/>
</dbReference>
<dbReference type="CDD" id="cd07017">
    <property type="entry name" value="S14_ClpP_2"/>
    <property type="match status" value="1"/>
</dbReference>
<dbReference type="FunFam" id="3.90.226.10:FF:000002">
    <property type="entry name" value="ATP-dependent Clp protease proteolytic subunit"/>
    <property type="match status" value="1"/>
</dbReference>
<dbReference type="Gene3D" id="3.90.226.10">
    <property type="entry name" value="2-enoyl-CoA Hydratase, Chain A, domain 1"/>
    <property type="match status" value="1"/>
</dbReference>
<dbReference type="HAMAP" id="MF_00444">
    <property type="entry name" value="ClpP"/>
    <property type="match status" value="1"/>
</dbReference>
<dbReference type="InterPro" id="IPR001907">
    <property type="entry name" value="ClpP"/>
</dbReference>
<dbReference type="InterPro" id="IPR029045">
    <property type="entry name" value="ClpP/crotonase-like_dom_sf"/>
</dbReference>
<dbReference type="InterPro" id="IPR023562">
    <property type="entry name" value="ClpP/TepA"/>
</dbReference>
<dbReference type="InterPro" id="IPR033135">
    <property type="entry name" value="ClpP_His_AS"/>
</dbReference>
<dbReference type="InterPro" id="IPR018215">
    <property type="entry name" value="ClpP_Ser_AS"/>
</dbReference>
<dbReference type="NCBIfam" id="NF001368">
    <property type="entry name" value="PRK00277.1"/>
    <property type="match status" value="1"/>
</dbReference>
<dbReference type="NCBIfam" id="NF009205">
    <property type="entry name" value="PRK12553.1"/>
    <property type="match status" value="1"/>
</dbReference>
<dbReference type="PANTHER" id="PTHR10381">
    <property type="entry name" value="ATP-DEPENDENT CLP PROTEASE PROTEOLYTIC SUBUNIT"/>
    <property type="match status" value="1"/>
</dbReference>
<dbReference type="PANTHER" id="PTHR10381:SF26">
    <property type="entry name" value="ATP-DEPENDENT CLP PROTEASE PROTEOLYTIC SUBUNIT-LIKE-RELATED"/>
    <property type="match status" value="1"/>
</dbReference>
<dbReference type="Pfam" id="PF00574">
    <property type="entry name" value="CLP_protease"/>
    <property type="match status" value="1"/>
</dbReference>
<dbReference type="PRINTS" id="PR00127">
    <property type="entry name" value="CLPPROTEASEP"/>
</dbReference>
<dbReference type="SUPFAM" id="SSF52096">
    <property type="entry name" value="ClpP/crotonase"/>
    <property type="match status" value="1"/>
</dbReference>
<dbReference type="PROSITE" id="PS00382">
    <property type="entry name" value="CLP_PROTEASE_HIS"/>
    <property type="match status" value="1"/>
</dbReference>
<dbReference type="PROSITE" id="PS00381">
    <property type="entry name" value="CLP_PROTEASE_SER"/>
    <property type="match status" value="1"/>
</dbReference>
<sequence length="214" mass="23540">MNSQNSQIQPQARYILPSFIEHSSFGVKESNPYNKLFEERIIFLGVQVDDASANDIMAQLLVLESLDPDRDITMYINSPGGGFTSLMAIYDTMQYVRADIQTVCLGQAASAAAVLLAAGTPGKRMALPNARVLIHQPSLSGVIQGQFSDLEIQAAEIERMRTLMETTLARHTGKDAGVIRKDTDRDKILTAEEAKDYGIIDTVLEYRKLSAQTA</sequence>
<evidence type="ECO:0000255" key="1">
    <source>
        <dbReference type="HAMAP-Rule" id="MF_00444"/>
    </source>
</evidence>
<evidence type="ECO:0000269" key="2">
    <source>
    </source>
</evidence>
<feature type="chain" id="PRO_0000426977" description="ATP-dependent Clp protease proteolytic subunit 2">
    <location>
        <begin position="1"/>
        <end position="214"/>
    </location>
</feature>
<feature type="active site" description="Nucleophile" evidence="1">
    <location>
        <position position="110"/>
    </location>
</feature>
<feature type="active site" evidence="1">
    <location>
        <position position="135"/>
    </location>
</feature>